<feature type="chain" id="PRO_0000188424" description="Glycerol-3-phosphate acyltransferase">
    <location>
        <begin position="1"/>
        <end position="204"/>
    </location>
</feature>
<feature type="transmembrane region" description="Helical" evidence="1">
    <location>
        <begin position="12"/>
        <end position="32"/>
    </location>
</feature>
<feature type="transmembrane region" description="Helical" evidence="1">
    <location>
        <begin position="85"/>
        <end position="105"/>
    </location>
</feature>
<feature type="transmembrane region" description="Helical" evidence="1">
    <location>
        <begin position="117"/>
        <end position="137"/>
    </location>
</feature>
<feature type="transmembrane region" description="Helical" evidence="1">
    <location>
        <begin position="142"/>
        <end position="162"/>
    </location>
</feature>
<feature type="transmembrane region" description="Helical" evidence="1">
    <location>
        <begin position="163"/>
        <end position="183"/>
    </location>
</feature>
<proteinExistence type="inferred from homology"/>
<comment type="function">
    <text evidence="1">Catalyzes the transfer of an acyl group from acyl-phosphate (acyl-PO(4)) to glycerol-3-phosphate (G3P) to form lysophosphatidic acid (LPA). This enzyme utilizes acyl-phosphate as fatty acyl donor, but not acyl-CoA or acyl-ACP.</text>
</comment>
<comment type="catalytic activity">
    <reaction evidence="1">
        <text>an acyl phosphate + sn-glycerol 3-phosphate = a 1-acyl-sn-glycero-3-phosphate + phosphate</text>
        <dbReference type="Rhea" id="RHEA:34075"/>
        <dbReference type="ChEBI" id="CHEBI:43474"/>
        <dbReference type="ChEBI" id="CHEBI:57597"/>
        <dbReference type="ChEBI" id="CHEBI:57970"/>
        <dbReference type="ChEBI" id="CHEBI:59918"/>
        <dbReference type="EC" id="2.3.1.275"/>
    </reaction>
</comment>
<comment type="pathway">
    <text evidence="1">Lipid metabolism; phospholipid metabolism.</text>
</comment>
<comment type="subunit">
    <text evidence="1">Probably interacts with PlsX.</text>
</comment>
<comment type="subcellular location">
    <subcellularLocation>
        <location evidence="1">Cell inner membrane</location>
        <topology evidence="1">Multi-pass membrane protein</topology>
    </subcellularLocation>
</comment>
<comment type="similarity">
    <text evidence="1">Belongs to the PlsY family.</text>
</comment>
<comment type="sequence caution" evidence="2">
    <conflict type="erroneous initiation">
        <sequence resource="EMBL-CDS" id="CAE21576"/>
    </conflict>
</comment>
<dbReference type="EC" id="2.3.1.275" evidence="1"/>
<dbReference type="EMBL" id="BX548175">
    <property type="protein sequence ID" value="CAE21576.1"/>
    <property type="status" value="ALT_INIT"/>
    <property type="molecule type" value="Genomic_DNA"/>
</dbReference>
<dbReference type="SMR" id="Q7V5Y3"/>
<dbReference type="KEGG" id="pmt:PMT_1401"/>
<dbReference type="eggNOG" id="COG0344">
    <property type="taxonomic scope" value="Bacteria"/>
</dbReference>
<dbReference type="HOGENOM" id="CLU_081254_7_1_3"/>
<dbReference type="UniPathway" id="UPA00085"/>
<dbReference type="Proteomes" id="UP000001423">
    <property type="component" value="Chromosome"/>
</dbReference>
<dbReference type="GO" id="GO:0005886">
    <property type="term" value="C:plasma membrane"/>
    <property type="evidence" value="ECO:0007669"/>
    <property type="project" value="UniProtKB-SubCell"/>
</dbReference>
<dbReference type="GO" id="GO:0043772">
    <property type="term" value="F:acyl-phosphate glycerol-3-phosphate acyltransferase activity"/>
    <property type="evidence" value="ECO:0007669"/>
    <property type="project" value="UniProtKB-UniRule"/>
</dbReference>
<dbReference type="GO" id="GO:0008654">
    <property type="term" value="P:phospholipid biosynthetic process"/>
    <property type="evidence" value="ECO:0007669"/>
    <property type="project" value="UniProtKB-UniRule"/>
</dbReference>
<dbReference type="HAMAP" id="MF_01043">
    <property type="entry name" value="PlsY"/>
    <property type="match status" value="1"/>
</dbReference>
<dbReference type="InterPro" id="IPR003811">
    <property type="entry name" value="G3P_acylTferase_PlsY"/>
</dbReference>
<dbReference type="NCBIfam" id="TIGR00023">
    <property type="entry name" value="glycerol-3-phosphate 1-O-acyltransferase PlsY"/>
    <property type="match status" value="1"/>
</dbReference>
<dbReference type="PANTHER" id="PTHR30309:SF0">
    <property type="entry name" value="GLYCEROL-3-PHOSPHATE ACYLTRANSFERASE-RELATED"/>
    <property type="match status" value="1"/>
</dbReference>
<dbReference type="PANTHER" id="PTHR30309">
    <property type="entry name" value="INNER MEMBRANE PROTEIN YGIH"/>
    <property type="match status" value="1"/>
</dbReference>
<dbReference type="Pfam" id="PF02660">
    <property type="entry name" value="G3P_acyltransf"/>
    <property type="match status" value="1"/>
</dbReference>
<dbReference type="SMART" id="SM01207">
    <property type="entry name" value="G3P_acyltransf"/>
    <property type="match status" value="1"/>
</dbReference>
<protein>
    <recommendedName>
        <fullName evidence="1">Glycerol-3-phosphate acyltransferase</fullName>
    </recommendedName>
    <alternativeName>
        <fullName evidence="1">Acyl-PO4 G3P acyltransferase</fullName>
    </alternativeName>
    <alternativeName>
        <fullName evidence="1">Acyl-phosphate--glycerol-3-phosphate acyltransferase</fullName>
    </alternativeName>
    <alternativeName>
        <fullName evidence="1">G3P acyltransferase</fullName>
        <shortName evidence="1">GPAT</shortName>
        <ecNumber evidence="1">2.3.1.275</ecNumber>
    </alternativeName>
    <alternativeName>
        <fullName evidence="1">Lysophosphatidic acid synthase</fullName>
        <shortName evidence="1">LPA synthase</shortName>
    </alternativeName>
</protein>
<organism>
    <name type="scientific">Prochlorococcus marinus (strain MIT 9313)</name>
    <dbReference type="NCBI Taxonomy" id="74547"/>
    <lineage>
        <taxon>Bacteria</taxon>
        <taxon>Bacillati</taxon>
        <taxon>Cyanobacteriota</taxon>
        <taxon>Cyanophyceae</taxon>
        <taxon>Synechococcales</taxon>
        <taxon>Prochlorococcaceae</taxon>
        <taxon>Prochlorococcus</taxon>
    </lineage>
</organism>
<evidence type="ECO:0000255" key="1">
    <source>
        <dbReference type="HAMAP-Rule" id="MF_01043"/>
    </source>
</evidence>
<evidence type="ECO:0000305" key="2"/>
<sequence length="204" mass="21370">MFNSLFGNLLSLVMGYLLGSLPSGYLAAHWLAGIDLREKGSGSTGATNVLRQVGKGPALAVFLIDVGKGTTAVLVARALELDDGWQVAAGLAALAGHIWPVWLGWKGGKAVATGLGMLLGISWPVGLACFGIFLTVLSFSRIVSLSSIIAALSLPLLMILRFQGNSPPAYLAVAFAAMAMVVWRHRSNLQRLLAGTEPRLGQSS</sequence>
<reference key="1">
    <citation type="journal article" date="2003" name="Nature">
        <title>Genome divergence in two Prochlorococcus ecotypes reflects oceanic niche differentiation.</title>
        <authorList>
            <person name="Rocap G."/>
            <person name="Larimer F.W."/>
            <person name="Lamerdin J.E."/>
            <person name="Malfatti S."/>
            <person name="Chain P."/>
            <person name="Ahlgren N.A."/>
            <person name="Arellano A."/>
            <person name="Coleman M."/>
            <person name="Hauser L."/>
            <person name="Hess W.R."/>
            <person name="Johnson Z.I."/>
            <person name="Land M.L."/>
            <person name="Lindell D."/>
            <person name="Post A.F."/>
            <person name="Regala W."/>
            <person name="Shah M."/>
            <person name="Shaw S.L."/>
            <person name="Steglich C."/>
            <person name="Sullivan M.B."/>
            <person name="Ting C.S."/>
            <person name="Tolonen A."/>
            <person name="Webb E.A."/>
            <person name="Zinser E.R."/>
            <person name="Chisholm S.W."/>
        </authorList>
    </citation>
    <scope>NUCLEOTIDE SEQUENCE [LARGE SCALE GENOMIC DNA]</scope>
    <source>
        <strain>MIT 9313</strain>
    </source>
</reference>
<keyword id="KW-0997">Cell inner membrane</keyword>
<keyword id="KW-1003">Cell membrane</keyword>
<keyword id="KW-0444">Lipid biosynthesis</keyword>
<keyword id="KW-0443">Lipid metabolism</keyword>
<keyword id="KW-0472">Membrane</keyword>
<keyword id="KW-0594">Phospholipid biosynthesis</keyword>
<keyword id="KW-1208">Phospholipid metabolism</keyword>
<keyword id="KW-1185">Reference proteome</keyword>
<keyword id="KW-0808">Transferase</keyword>
<keyword id="KW-0812">Transmembrane</keyword>
<keyword id="KW-1133">Transmembrane helix</keyword>
<gene>
    <name evidence="1" type="primary">plsY</name>
    <name type="ordered locus">PMT_1401</name>
</gene>
<name>PLSY_PROMM</name>
<accession>Q7V5Y3</accession>